<dbReference type="EMBL" id="AF003591">
    <property type="protein sequence ID" value="AAB61742.1"/>
    <property type="molecule type" value="Genomic_DNA"/>
</dbReference>
<dbReference type="EMBL" id="U00096">
    <property type="protein sequence ID" value="AAC74074.1"/>
    <property type="molecule type" value="Genomic_DNA"/>
</dbReference>
<dbReference type="EMBL" id="AP009048">
    <property type="protein sequence ID" value="BAA35755.2"/>
    <property type="molecule type" value="Genomic_DNA"/>
</dbReference>
<dbReference type="PIR" id="C64840">
    <property type="entry name" value="C64840"/>
</dbReference>
<dbReference type="RefSeq" id="NP_415509.1">
    <property type="nucleotide sequence ID" value="NC_000913.3"/>
</dbReference>
<dbReference type="RefSeq" id="WP_000087763.1">
    <property type="nucleotide sequence ID" value="NZ_STEB01000006.1"/>
</dbReference>
<dbReference type="SMR" id="P0A982"/>
<dbReference type="BioGRID" id="4260035">
    <property type="interactions" value="89"/>
</dbReference>
<dbReference type="FunCoup" id="P0A982">
    <property type="interactions" value="5"/>
</dbReference>
<dbReference type="STRING" id="511145.b0989"/>
<dbReference type="PaxDb" id="511145-b0989"/>
<dbReference type="EnsemblBacteria" id="AAC74074">
    <property type="protein sequence ID" value="AAC74074"/>
    <property type="gene ID" value="b0989"/>
</dbReference>
<dbReference type="GeneID" id="93776424"/>
<dbReference type="GeneID" id="945590"/>
<dbReference type="KEGG" id="ecj:JW5134"/>
<dbReference type="KEGG" id="eco:b0989"/>
<dbReference type="KEGG" id="ecoc:C3026_06030"/>
<dbReference type="PATRIC" id="fig|511145.12.peg.1025"/>
<dbReference type="EchoBASE" id="EB4029"/>
<dbReference type="eggNOG" id="COG1278">
    <property type="taxonomic scope" value="Bacteria"/>
</dbReference>
<dbReference type="HOGENOM" id="CLU_117621_2_1_6"/>
<dbReference type="InParanoid" id="P0A982"/>
<dbReference type="OMA" id="SHKMTGI"/>
<dbReference type="OrthoDB" id="6590265at2"/>
<dbReference type="PhylomeDB" id="P0A982"/>
<dbReference type="BioCyc" id="EcoCyc:G6510-MONOMER"/>
<dbReference type="PRO" id="PR:P0A982"/>
<dbReference type="Proteomes" id="UP000000625">
    <property type="component" value="Chromosome"/>
</dbReference>
<dbReference type="GO" id="GO:0005829">
    <property type="term" value="C:cytosol"/>
    <property type="evidence" value="ECO:0007669"/>
    <property type="project" value="UniProtKB-ARBA"/>
</dbReference>
<dbReference type="GO" id="GO:0003677">
    <property type="term" value="F:DNA binding"/>
    <property type="evidence" value="ECO:0007669"/>
    <property type="project" value="UniProtKB-KW"/>
</dbReference>
<dbReference type="GO" id="GO:0003676">
    <property type="term" value="F:nucleic acid binding"/>
    <property type="evidence" value="ECO:0000318"/>
    <property type="project" value="GO_Central"/>
</dbReference>
<dbReference type="GO" id="GO:0010468">
    <property type="term" value="P:regulation of gene expression"/>
    <property type="evidence" value="ECO:0000318"/>
    <property type="project" value="GO_Central"/>
</dbReference>
<dbReference type="CDD" id="cd04458">
    <property type="entry name" value="CSP_CDS"/>
    <property type="match status" value="1"/>
</dbReference>
<dbReference type="Gene3D" id="2.40.50.140">
    <property type="entry name" value="Nucleic acid-binding proteins"/>
    <property type="match status" value="1"/>
</dbReference>
<dbReference type="InterPro" id="IPR012156">
    <property type="entry name" value="Cold_shock_CspA"/>
</dbReference>
<dbReference type="InterPro" id="IPR050181">
    <property type="entry name" value="Cold_shock_domain"/>
</dbReference>
<dbReference type="InterPro" id="IPR011129">
    <property type="entry name" value="CSD"/>
</dbReference>
<dbReference type="InterPro" id="IPR019844">
    <property type="entry name" value="CSD_CS"/>
</dbReference>
<dbReference type="InterPro" id="IPR002059">
    <property type="entry name" value="CSP_DNA-bd"/>
</dbReference>
<dbReference type="InterPro" id="IPR012340">
    <property type="entry name" value="NA-bd_OB-fold"/>
</dbReference>
<dbReference type="NCBIfam" id="NF012007">
    <property type="entry name" value="PRK15463.1"/>
    <property type="match status" value="1"/>
</dbReference>
<dbReference type="NCBIfam" id="NF012008">
    <property type="entry name" value="PRK15464.1"/>
    <property type="match status" value="1"/>
</dbReference>
<dbReference type="PANTHER" id="PTHR11544">
    <property type="entry name" value="COLD SHOCK DOMAIN CONTAINING PROTEINS"/>
    <property type="match status" value="1"/>
</dbReference>
<dbReference type="Pfam" id="PF00313">
    <property type="entry name" value="CSD"/>
    <property type="match status" value="1"/>
</dbReference>
<dbReference type="PIRSF" id="PIRSF002599">
    <property type="entry name" value="Cold_shock_A"/>
    <property type="match status" value="1"/>
</dbReference>
<dbReference type="SMART" id="SM00357">
    <property type="entry name" value="CSP"/>
    <property type="match status" value="1"/>
</dbReference>
<dbReference type="SUPFAM" id="SSF50249">
    <property type="entry name" value="Nucleic acid-binding proteins"/>
    <property type="match status" value="1"/>
</dbReference>
<dbReference type="PROSITE" id="PS00352">
    <property type="entry name" value="CSD_1"/>
    <property type="match status" value="1"/>
</dbReference>
<dbReference type="PROSITE" id="PS51857">
    <property type="entry name" value="CSD_2"/>
    <property type="match status" value="1"/>
</dbReference>
<proteinExistence type="inferred from homology"/>
<gene>
    <name type="primary">cspH</name>
    <name type="synonym">cspK</name>
    <name type="ordered locus">b0989</name>
    <name type="ordered locus">JW5134</name>
</gene>
<protein>
    <recommendedName>
        <fullName>Cold shock-like protein CspH</fullName>
        <shortName>CSP-H</shortName>
    </recommendedName>
</protein>
<organism>
    <name type="scientific">Escherichia coli (strain K12)</name>
    <dbReference type="NCBI Taxonomy" id="83333"/>
    <lineage>
        <taxon>Bacteria</taxon>
        <taxon>Pseudomonadati</taxon>
        <taxon>Pseudomonadota</taxon>
        <taxon>Gammaproteobacteria</taxon>
        <taxon>Enterobacterales</taxon>
        <taxon>Enterobacteriaceae</taxon>
        <taxon>Escherichia</taxon>
    </lineage>
</organism>
<reference key="1">
    <citation type="journal article" date="1997" name="J. Ind. Microbiol. Biotechnol.">
        <title>Detection and speciation of bacteria through PCR using universal major cold-shock protein primer oligomers.</title>
        <authorList>
            <person name="Francis K.P."/>
            <person name="Stewart G.S.A.B."/>
        </authorList>
    </citation>
    <scope>NUCLEOTIDE SEQUENCE [GENOMIC DNA]</scope>
    <source>
        <strain>K12 / W3110 / ATCC 27325 / DSM 5911</strain>
    </source>
</reference>
<reference key="2">
    <citation type="journal article" date="1996" name="DNA Res.">
        <title>A 718-kb DNA sequence of the Escherichia coli K-12 genome corresponding to the 12.7-28.0 min region on the linkage map.</title>
        <authorList>
            <person name="Oshima T."/>
            <person name="Aiba H."/>
            <person name="Baba T."/>
            <person name="Fujita K."/>
            <person name="Hayashi K."/>
            <person name="Honjo A."/>
            <person name="Ikemoto K."/>
            <person name="Inada T."/>
            <person name="Itoh T."/>
            <person name="Kajihara M."/>
            <person name="Kanai K."/>
            <person name="Kashimoto K."/>
            <person name="Kimura S."/>
            <person name="Kitagawa M."/>
            <person name="Makino K."/>
            <person name="Masuda S."/>
            <person name="Miki T."/>
            <person name="Mizobuchi K."/>
            <person name="Mori H."/>
            <person name="Motomura K."/>
            <person name="Nakamura Y."/>
            <person name="Nashimoto H."/>
            <person name="Nishio Y."/>
            <person name="Saito N."/>
            <person name="Sampei G."/>
            <person name="Seki Y."/>
            <person name="Tagami H."/>
            <person name="Takemoto K."/>
            <person name="Wada C."/>
            <person name="Yamamoto Y."/>
            <person name="Yano M."/>
            <person name="Horiuchi T."/>
        </authorList>
    </citation>
    <scope>NUCLEOTIDE SEQUENCE [LARGE SCALE GENOMIC DNA]</scope>
    <source>
        <strain>K12 / W3110 / ATCC 27325 / DSM 5911</strain>
    </source>
</reference>
<reference key="3">
    <citation type="journal article" date="1997" name="Science">
        <title>The complete genome sequence of Escherichia coli K-12.</title>
        <authorList>
            <person name="Blattner F.R."/>
            <person name="Plunkett G. III"/>
            <person name="Bloch C.A."/>
            <person name="Perna N.T."/>
            <person name="Burland V."/>
            <person name="Riley M."/>
            <person name="Collado-Vides J."/>
            <person name="Glasner J.D."/>
            <person name="Rode C.K."/>
            <person name="Mayhew G.F."/>
            <person name="Gregor J."/>
            <person name="Davis N.W."/>
            <person name="Kirkpatrick H.A."/>
            <person name="Goeden M.A."/>
            <person name="Rose D.J."/>
            <person name="Mau B."/>
            <person name="Shao Y."/>
        </authorList>
    </citation>
    <scope>NUCLEOTIDE SEQUENCE [LARGE SCALE GENOMIC DNA]</scope>
    <source>
        <strain>K12 / MG1655 / ATCC 47076</strain>
    </source>
</reference>
<reference key="4">
    <citation type="journal article" date="2006" name="Mol. Syst. Biol.">
        <title>Highly accurate genome sequences of Escherichia coli K-12 strains MG1655 and W3110.</title>
        <authorList>
            <person name="Hayashi K."/>
            <person name="Morooka N."/>
            <person name="Yamamoto Y."/>
            <person name="Fujita K."/>
            <person name="Isono K."/>
            <person name="Choi S."/>
            <person name="Ohtsubo E."/>
            <person name="Baba T."/>
            <person name="Wanner B.L."/>
            <person name="Mori H."/>
            <person name="Horiuchi T."/>
        </authorList>
    </citation>
    <scope>NUCLEOTIDE SEQUENCE [LARGE SCALE GENOMIC DNA]</scope>
    <source>
        <strain>K12 / W3110 / ATCC 27325 / DSM 5911</strain>
    </source>
</reference>
<comment type="subcellular location">
    <subcellularLocation>
        <location evidence="1">Cytoplasm</location>
    </subcellularLocation>
</comment>
<sequence>MSRKMTGIVKTFDRKSGKGFIIPSDGRKEVQVHISAFTPRDAEVLIPGLRVEFCRVNGLRGPTAANVYLS</sequence>
<evidence type="ECO:0000250" key="1"/>
<name>CSPH_ECOLI</name>
<feature type="chain" id="PRO_0000100266" description="Cold shock-like protein CspH">
    <location>
        <begin position="1"/>
        <end position="70"/>
    </location>
</feature>
<feature type="domain" description="CSD">
    <location>
        <begin position="7"/>
        <end position="67"/>
    </location>
</feature>
<keyword id="KW-0010">Activator</keyword>
<keyword id="KW-0963">Cytoplasm</keyword>
<keyword id="KW-0238">DNA-binding</keyword>
<keyword id="KW-1185">Reference proteome</keyword>
<keyword id="KW-0804">Transcription</keyword>
<keyword id="KW-0805">Transcription regulation</keyword>
<accession>P0A982</accession>
<accession>P56253</accession>
<accession>Q9R3K1</accession>